<name>H3_PLADU</name>
<protein>
    <recommendedName>
        <fullName>Histone H3</fullName>
    </recommendedName>
</protein>
<sequence>MARTKQTARKSTGGKAPRKQLATKAARKSAPATGGVKKPHRYRPGTVALREIRRYQKSTELLIRKLPFQRLVREIAQDFKTDLRFQSSAVMALQEASEAYLVGLFEDTNLCAIHAKRVTIMPKDIQLARRIRGERA</sequence>
<keyword id="KW-0007">Acetylation</keyword>
<keyword id="KW-0158">Chromosome</keyword>
<keyword id="KW-0238">DNA-binding</keyword>
<keyword id="KW-0488">Methylation</keyword>
<keyword id="KW-0544">Nucleosome core</keyword>
<keyword id="KW-0539">Nucleus</keyword>
<keyword id="KW-0597">Phosphoprotein</keyword>
<reference key="1">
    <citation type="journal article" date="1990" name="Eur. J. Biochem.">
        <title>Organization and complete nucleotide sequence of the core-histone-gene cluster of the annelid Platynereis dumerilii.</title>
        <authorList>
            <person name="Sellos D."/>
            <person name="Krawetz S.A."/>
            <person name="Dixon G.H."/>
        </authorList>
    </citation>
    <scope>NUCLEOTIDE SEQUENCE [GENOMIC DNA]</scope>
    <source>
        <tissue>Sperm</tissue>
    </source>
</reference>
<feature type="initiator methionine" description="Removed" evidence="1">
    <location>
        <position position="1"/>
    </location>
</feature>
<feature type="chain" id="PRO_0000221306" description="Histone H3">
    <location>
        <begin position="2"/>
        <end position="136"/>
    </location>
</feature>
<feature type="region of interest" description="Disordered" evidence="2">
    <location>
        <begin position="1"/>
        <end position="43"/>
    </location>
</feature>
<feature type="modified residue" description="N6-methylated lysine" evidence="1">
    <location>
        <position position="5"/>
    </location>
</feature>
<feature type="modified residue" description="N6-acetyllysine; alternate" evidence="1">
    <location>
        <position position="10"/>
    </location>
</feature>
<feature type="modified residue" description="N6-methylated lysine; alternate" evidence="1">
    <location>
        <position position="10"/>
    </location>
</feature>
<feature type="modified residue" description="Phosphoserine" evidence="1">
    <location>
        <position position="11"/>
    </location>
</feature>
<feature type="modified residue" description="N6-acetyllysine" evidence="1">
    <location>
        <position position="15"/>
    </location>
</feature>
<feature type="modified residue" description="N6-acetyllysine" evidence="1">
    <location>
        <position position="24"/>
    </location>
</feature>
<feature type="modified residue" description="N6-methylated lysine" evidence="1">
    <location>
        <position position="28"/>
    </location>
</feature>
<feature type="modified residue" description="N6-methylated lysine" evidence="1">
    <location>
        <position position="37"/>
    </location>
</feature>
<feature type="modified residue" description="N6-methylated lysine" evidence="1">
    <location>
        <position position="80"/>
    </location>
</feature>
<evidence type="ECO:0000250" key="1"/>
<evidence type="ECO:0000256" key="2">
    <source>
        <dbReference type="SAM" id="MobiDB-lite"/>
    </source>
</evidence>
<evidence type="ECO:0000305" key="3"/>
<dbReference type="EMBL" id="X53330">
    <property type="protein sequence ID" value="CAA37417.1"/>
    <property type="molecule type" value="Genomic_DNA"/>
</dbReference>
<dbReference type="PIR" id="S11315">
    <property type="entry name" value="S11315"/>
</dbReference>
<dbReference type="SMR" id="P84235"/>
<dbReference type="GO" id="GO:0000786">
    <property type="term" value="C:nucleosome"/>
    <property type="evidence" value="ECO:0007669"/>
    <property type="project" value="UniProtKB-KW"/>
</dbReference>
<dbReference type="GO" id="GO:0005634">
    <property type="term" value="C:nucleus"/>
    <property type="evidence" value="ECO:0007669"/>
    <property type="project" value="UniProtKB-SubCell"/>
</dbReference>
<dbReference type="GO" id="GO:0003677">
    <property type="term" value="F:DNA binding"/>
    <property type="evidence" value="ECO:0007669"/>
    <property type="project" value="UniProtKB-KW"/>
</dbReference>
<dbReference type="GO" id="GO:0046982">
    <property type="term" value="F:protein heterodimerization activity"/>
    <property type="evidence" value="ECO:0007669"/>
    <property type="project" value="InterPro"/>
</dbReference>
<dbReference type="GO" id="GO:0030527">
    <property type="term" value="F:structural constituent of chromatin"/>
    <property type="evidence" value="ECO:0007669"/>
    <property type="project" value="InterPro"/>
</dbReference>
<dbReference type="CDD" id="cd22911">
    <property type="entry name" value="HFD_H3"/>
    <property type="match status" value="1"/>
</dbReference>
<dbReference type="FunFam" id="1.10.20.10:FF:000078">
    <property type="entry name" value="Histone H3"/>
    <property type="match status" value="1"/>
</dbReference>
<dbReference type="FunFam" id="1.10.20.10:FF:000044">
    <property type="entry name" value="Histone H3.3"/>
    <property type="match status" value="1"/>
</dbReference>
<dbReference type="Gene3D" id="1.10.20.10">
    <property type="entry name" value="Histone, subunit A"/>
    <property type="match status" value="1"/>
</dbReference>
<dbReference type="InterPro" id="IPR009072">
    <property type="entry name" value="Histone-fold"/>
</dbReference>
<dbReference type="InterPro" id="IPR007125">
    <property type="entry name" value="Histone_H2A/H2B/H3"/>
</dbReference>
<dbReference type="InterPro" id="IPR000164">
    <property type="entry name" value="Histone_H3/CENP-A"/>
</dbReference>
<dbReference type="PANTHER" id="PTHR11426">
    <property type="entry name" value="HISTONE H3"/>
    <property type="match status" value="1"/>
</dbReference>
<dbReference type="Pfam" id="PF00125">
    <property type="entry name" value="Histone"/>
    <property type="match status" value="1"/>
</dbReference>
<dbReference type="PRINTS" id="PR00622">
    <property type="entry name" value="HISTONEH3"/>
</dbReference>
<dbReference type="SMART" id="SM00428">
    <property type="entry name" value="H3"/>
    <property type="match status" value="1"/>
</dbReference>
<dbReference type="SUPFAM" id="SSF47113">
    <property type="entry name" value="Histone-fold"/>
    <property type="match status" value="1"/>
</dbReference>
<dbReference type="PROSITE" id="PS00322">
    <property type="entry name" value="HISTONE_H3_1"/>
    <property type="match status" value="1"/>
</dbReference>
<dbReference type="PROSITE" id="PS00959">
    <property type="entry name" value="HISTONE_H3_2"/>
    <property type="match status" value="1"/>
</dbReference>
<organism>
    <name type="scientific">Platynereis dumerilii</name>
    <name type="common">Dumeril's clam worm</name>
    <dbReference type="NCBI Taxonomy" id="6359"/>
    <lineage>
        <taxon>Eukaryota</taxon>
        <taxon>Metazoa</taxon>
        <taxon>Spiralia</taxon>
        <taxon>Lophotrochozoa</taxon>
        <taxon>Annelida</taxon>
        <taxon>Polychaeta</taxon>
        <taxon>Errantia</taxon>
        <taxon>Phyllodocida</taxon>
        <taxon>Nereididae</taxon>
        <taxon>Platynereis</taxon>
    </lineage>
</organism>
<accession>P84235</accession>
<accession>P02295</accession>
<accession>P02297</accession>
<accession>P16105</accession>
<accession>P17269</accession>
<accession>P17320</accession>
<comment type="function">
    <text>Core component of nucleosome. Nucleosomes wrap and compact DNA into chromatin, limiting DNA accessibility to the cellular machineries which require DNA as a template. Histones thereby play a central role in transcription regulation, DNA repair, DNA replication and chromosomal stability. DNA accessibility is regulated via a complex set of post-translational modifications of histones, also called histone code, and nucleosome remodeling.</text>
</comment>
<comment type="subunit">
    <text>The nucleosome is a histone octamer containing two molecules each of H2A, H2B, H3 and H4 assembled in one H3-H4 heterotetramer and two H2A-H2B heterodimers. The octamer wraps approximately 147 bp of DNA.</text>
</comment>
<comment type="subcellular location">
    <subcellularLocation>
        <location evidence="1">Nucleus</location>
    </subcellularLocation>
    <subcellularLocation>
        <location evidence="1">Chromosome</location>
    </subcellularLocation>
</comment>
<comment type="PTM">
    <text evidence="1">Acetylation is generally linked to gene activation.</text>
</comment>
<comment type="PTM">
    <text evidence="1">Methylation at Lys-5 is linked to gene activation. Methylation at Lys-10 is linked to gene repression (By similarity).</text>
</comment>
<comment type="similarity">
    <text evidence="3">Belongs to the histone H3 family.</text>
</comment>
<proteinExistence type="inferred from homology"/>